<reference key="1">
    <citation type="journal article" date="2001" name="Nature">
        <title>Complete genome sequence of a multiple drug resistant Salmonella enterica serovar Typhi CT18.</title>
        <authorList>
            <person name="Parkhill J."/>
            <person name="Dougan G."/>
            <person name="James K.D."/>
            <person name="Thomson N.R."/>
            <person name="Pickard D."/>
            <person name="Wain J."/>
            <person name="Churcher C.M."/>
            <person name="Mungall K.L."/>
            <person name="Bentley S.D."/>
            <person name="Holden M.T.G."/>
            <person name="Sebaihia M."/>
            <person name="Baker S."/>
            <person name="Basham D."/>
            <person name="Brooks K."/>
            <person name="Chillingworth T."/>
            <person name="Connerton P."/>
            <person name="Cronin A."/>
            <person name="Davis P."/>
            <person name="Davies R.M."/>
            <person name="Dowd L."/>
            <person name="White N."/>
            <person name="Farrar J."/>
            <person name="Feltwell T."/>
            <person name="Hamlin N."/>
            <person name="Haque A."/>
            <person name="Hien T.T."/>
            <person name="Holroyd S."/>
            <person name="Jagels K."/>
            <person name="Krogh A."/>
            <person name="Larsen T.S."/>
            <person name="Leather S."/>
            <person name="Moule S."/>
            <person name="O'Gaora P."/>
            <person name="Parry C."/>
            <person name="Quail M.A."/>
            <person name="Rutherford K.M."/>
            <person name="Simmonds M."/>
            <person name="Skelton J."/>
            <person name="Stevens K."/>
            <person name="Whitehead S."/>
            <person name="Barrell B.G."/>
        </authorList>
    </citation>
    <scope>NUCLEOTIDE SEQUENCE [LARGE SCALE GENOMIC DNA]</scope>
    <source>
        <strain>CT18</strain>
    </source>
</reference>
<reference key="2">
    <citation type="journal article" date="2003" name="J. Bacteriol.">
        <title>Comparative genomics of Salmonella enterica serovar Typhi strains Ty2 and CT18.</title>
        <authorList>
            <person name="Deng W."/>
            <person name="Liou S.-R."/>
            <person name="Plunkett G. III"/>
            <person name="Mayhew G.F."/>
            <person name="Rose D.J."/>
            <person name="Burland V."/>
            <person name="Kodoyianni V."/>
            <person name="Schwartz D.C."/>
            <person name="Blattner F.R."/>
        </authorList>
    </citation>
    <scope>NUCLEOTIDE SEQUENCE [LARGE SCALE GENOMIC DNA]</scope>
    <source>
        <strain>ATCC 700931 / Ty2</strain>
    </source>
</reference>
<sequence>MDKIEVRGARTHNLKNINLVIPRDKLIVVTGLSGSGKSSLAFDTLYAEGQRRYVESLSAYARQFLSLMEKPDVDHIEGLSPAISIEQKSTSHNPRSTVGTITEIHDYLRLLFARVGEPRCPDHDVPLAAQTVSQMVDNVLSQPEGKRLMLLAPIIKERKGEHTKTLENLASQGYIRARIDGEVCDLSDPPKLELQKKHTIEVVIDRFKVRNDLSQRLAESFETALELSGGTAVVADMDDEKAEELLFSANFACPICGYSMRELEPRLFSFNNPAGACPTCDGLGVQQYFDPDRVIQNPDLSLAGGAIRGWDRRNFYYFQMLKSLAEHYKFDVDAPWASLSANVHKVVLYGSGKENIEFKYMNDRGDTSVRRHPFEGVLHNMERRYKETESSAVREELAKFISNRPCASCEGTRLNREARHVFVENTPLPAISDMSIGHAMDFFTNLKLSGQRAKIAEKVLKEIGDRLKFLVNVGLNYLTLSRSAETLSGGEAQRIRLASQIGAGLVGVMYVLDEPSIGLHQRDNERLLGTLIHLRNLGNTVIVVEHDEDAIRAADHVIDIGPGAGVHGGEVVAEGPLEAIMAVPESLTGQYMSGKRKIEVPKQRVPANPEKVLKLTGARGNNLKDVTLTLPVGLFTCITGVSGSGKSTLINDTLFPIAQRQLNGATIAEPAPYRDIQGLEHFDKVIDIDQSPIGRTPRSNPATYTGVFTPVRELFAGVPESRSRGYTPGRFSFNVRGGRCEACQGDGVIKVEMHFLPDIYVPCDQCKGKRYNRETLEIKYKGKTIHEVLDMTIEEAREFFDAVPALARKLQTLMDVGLTYIRLGQSATTLSGGEAQRVKLARELSKRGTGQTLYILDEPTTGLHFADIQQLLDVLHQLRDQGNTIVVIEHNLDVIKTADWIVDLGPEGGSGGGEILVAGTPETVAECEASHTARFLKPMLK</sequence>
<proteinExistence type="inferred from homology"/>
<protein>
    <recommendedName>
        <fullName evidence="2">UvrABC system protein A</fullName>
        <shortName evidence="2">UvrA protein</shortName>
    </recommendedName>
    <alternativeName>
        <fullName evidence="2">Excinuclease ABC subunit A</fullName>
    </alternativeName>
</protein>
<organism>
    <name type="scientific">Salmonella typhi</name>
    <dbReference type="NCBI Taxonomy" id="90370"/>
    <lineage>
        <taxon>Bacteria</taxon>
        <taxon>Pseudomonadati</taxon>
        <taxon>Pseudomonadota</taxon>
        <taxon>Gammaproteobacteria</taxon>
        <taxon>Enterobacterales</taxon>
        <taxon>Enterobacteriaceae</taxon>
        <taxon>Salmonella</taxon>
    </lineage>
</organism>
<feature type="chain" id="PRO_0000093085" description="UvrABC system protein A">
    <location>
        <begin position="1"/>
        <end position="941"/>
    </location>
</feature>
<feature type="domain" description="ABC transporter 1" evidence="2">
    <location>
        <begin position="310"/>
        <end position="587"/>
    </location>
</feature>
<feature type="domain" description="ABC transporter 2" evidence="2">
    <location>
        <begin position="607"/>
        <end position="937"/>
    </location>
</feature>
<feature type="zinc finger region" description="C4-type" evidence="2">
    <location>
        <begin position="253"/>
        <end position="280"/>
    </location>
</feature>
<feature type="zinc finger region" description="C4-type" evidence="2">
    <location>
        <begin position="740"/>
        <end position="766"/>
    </location>
</feature>
<feature type="binding site">
    <location>
        <begin position="31"/>
        <end position="38"/>
    </location>
    <ligand>
        <name>ATP</name>
        <dbReference type="ChEBI" id="CHEBI:30616"/>
    </ligand>
</feature>
<feature type="binding site">
    <location>
        <begin position="640"/>
        <end position="647"/>
    </location>
    <ligand>
        <name>ATP</name>
        <dbReference type="ChEBI" id="CHEBI:30616"/>
    </ligand>
</feature>
<keyword id="KW-0067">ATP-binding</keyword>
<keyword id="KW-0963">Cytoplasm</keyword>
<keyword id="KW-0227">DNA damage</keyword>
<keyword id="KW-0228">DNA excision</keyword>
<keyword id="KW-0234">DNA repair</keyword>
<keyword id="KW-0238">DNA-binding</keyword>
<keyword id="KW-0267">Excision nuclease</keyword>
<keyword id="KW-0479">Metal-binding</keyword>
<keyword id="KW-0547">Nucleotide-binding</keyword>
<keyword id="KW-0677">Repeat</keyword>
<keyword id="KW-0742">SOS response</keyword>
<keyword id="KW-0862">Zinc</keyword>
<keyword id="KW-0863">Zinc-finger</keyword>
<dbReference type="EMBL" id="AL513382">
    <property type="protein sequence ID" value="CAD09238.1"/>
    <property type="molecule type" value="Genomic_DNA"/>
</dbReference>
<dbReference type="EMBL" id="AE014613">
    <property type="protein sequence ID" value="AAO71624.1"/>
    <property type="molecule type" value="Genomic_DNA"/>
</dbReference>
<dbReference type="RefSeq" id="NP_458552.1">
    <property type="nucleotide sequence ID" value="NC_003198.1"/>
</dbReference>
<dbReference type="RefSeq" id="WP_000357724.1">
    <property type="nucleotide sequence ID" value="NZ_WSUR01000027.1"/>
</dbReference>
<dbReference type="SMR" id="P0A196"/>
<dbReference type="STRING" id="220341.gene:17588282"/>
<dbReference type="KEGG" id="stt:t4160"/>
<dbReference type="KEGG" id="sty:STY4450"/>
<dbReference type="PATRIC" id="fig|220341.7.peg.4551"/>
<dbReference type="eggNOG" id="COG0178">
    <property type="taxonomic scope" value="Bacteria"/>
</dbReference>
<dbReference type="HOGENOM" id="CLU_001370_0_2_6"/>
<dbReference type="OMA" id="EFFKAVP"/>
<dbReference type="OrthoDB" id="9809851at2"/>
<dbReference type="Proteomes" id="UP000000541">
    <property type="component" value="Chromosome"/>
</dbReference>
<dbReference type="Proteomes" id="UP000002670">
    <property type="component" value="Chromosome"/>
</dbReference>
<dbReference type="GO" id="GO:0005737">
    <property type="term" value="C:cytoplasm"/>
    <property type="evidence" value="ECO:0007669"/>
    <property type="project" value="UniProtKB-SubCell"/>
</dbReference>
<dbReference type="GO" id="GO:0009380">
    <property type="term" value="C:excinuclease repair complex"/>
    <property type="evidence" value="ECO:0007669"/>
    <property type="project" value="InterPro"/>
</dbReference>
<dbReference type="GO" id="GO:0005524">
    <property type="term" value="F:ATP binding"/>
    <property type="evidence" value="ECO:0007669"/>
    <property type="project" value="UniProtKB-UniRule"/>
</dbReference>
<dbReference type="GO" id="GO:0016887">
    <property type="term" value="F:ATP hydrolysis activity"/>
    <property type="evidence" value="ECO:0007669"/>
    <property type="project" value="InterPro"/>
</dbReference>
<dbReference type="GO" id="GO:0003677">
    <property type="term" value="F:DNA binding"/>
    <property type="evidence" value="ECO:0007669"/>
    <property type="project" value="UniProtKB-UniRule"/>
</dbReference>
<dbReference type="GO" id="GO:0009381">
    <property type="term" value="F:excinuclease ABC activity"/>
    <property type="evidence" value="ECO:0007669"/>
    <property type="project" value="UniProtKB-UniRule"/>
</dbReference>
<dbReference type="GO" id="GO:0008270">
    <property type="term" value="F:zinc ion binding"/>
    <property type="evidence" value="ECO:0007669"/>
    <property type="project" value="UniProtKB-UniRule"/>
</dbReference>
<dbReference type="GO" id="GO:0006289">
    <property type="term" value="P:nucleotide-excision repair"/>
    <property type="evidence" value="ECO:0007669"/>
    <property type="project" value="UniProtKB-UniRule"/>
</dbReference>
<dbReference type="GO" id="GO:0009432">
    <property type="term" value="P:SOS response"/>
    <property type="evidence" value="ECO:0007669"/>
    <property type="project" value="UniProtKB-UniRule"/>
</dbReference>
<dbReference type="CDD" id="cd03270">
    <property type="entry name" value="ABC_UvrA_I"/>
    <property type="match status" value="1"/>
</dbReference>
<dbReference type="CDD" id="cd03271">
    <property type="entry name" value="ABC_UvrA_II"/>
    <property type="match status" value="1"/>
</dbReference>
<dbReference type="FunFam" id="1.10.8.280:FF:000001">
    <property type="entry name" value="UvrABC system protein A"/>
    <property type="match status" value="1"/>
</dbReference>
<dbReference type="FunFam" id="1.20.1580.10:FF:000002">
    <property type="entry name" value="UvrABC system protein A"/>
    <property type="match status" value="1"/>
</dbReference>
<dbReference type="FunFam" id="1.20.1580.10:FF:000003">
    <property type="entry name" value="UvrABC system protein A"/>
    <property type="match status" value="1"/>
</dbReference>
<dbReference type="FunFam" id="3.30.190.20:FF:000003">
    <property type="entry name" value="UvrABC system protein A"/>
    <property type="match status" value="1"/>
</dbReference>
<dbReference type="Gene3D" id="1.10.8.280">
    <property type="entry name" value="ABC transporter ATPase domain-like"/>
    <property type="match status" value="1"/>
</dbReference>
<dbReference type="Gene3D" id="1.20.1580.10">
    <property type="entry name" value="ABC transporter ATPase like domain"/>
    <property type="match status" value="2"/>
</dbReference>
<dbReference type="Gene3D" id="3.30.1490.20">
    <property type="entry name" value="ATP-grasp fold, A domain"/>
    <property type="match status" value="1"/>
</dbReference>
<dbReference type="Gene3D" id="3.40.50.300">
    <property type="entry name" value="P-loop containing nucleotide triphosphate hydrolases"/>
    <property type="match status" value="2"/>
</dbReference>
<dbReference type="HAMAP" id="MF_00205">
    <property type="entry name" value="UvrA"/>
    <property type="match status" value="1"/>
</dbReference>
<dbReference type="InterPro" id="IPR003439">
    <property type="entry name" value="ABC_transporter-like_ATP-bd"/>
</dbReference>
<dbReference type="InterPro" id="IPR017871">
    <property type="entry name" value="ABC_transporter-like_CS"/>
</dbReference>
<dbReference type="InterPro" id="IPR013815">
    <property type="entry name" value="ATP_grasp_subdomain_1"/>
</dbReference>
<dbReference type="InterPro" id="IPR027417">
    <property type="entry name" value="P-loop_NTPase"/>
</dbReference>
<dbReference type="InterPro" id="IPR004602">
    <property type="entry name" value="UvrA"/>
</dbReference>
<dbReference type="InterPro" id="IPR041552">
    <property type="entry name" value="UvrA_DNA-bd"/>
</dbReference>
<dbReference type="InterPro" id="IPR041102">
    <property type="entry name" value="UvrA_inter"/>
</dbReference>
<dbReference type="NCBIfam" id="NF001503">
    <property type="entry name" value="PRK00349.1"/>
    <property type="match status" value="1"/>
</dbReference>
<dbReference type="NCBIfam" id="TIGR00630">
    <property type="entry name" value="uvra"/>
    <property type="match status" value="1"/>
</dbReference>
<dbReference type="PANTHER" id="PTHR43152">
    <property type="entry name" value="UVRABC SYSTEM PROTEIN A"/>
    <property type="match status" value="1"/>
</dbReference>
<dbReference type="PANTHER" id="PTHR43152:SF3">
    <property type="entry name" value="UVRABC SYSTEM PROTEIN A"/>
    <property type="match status" value="1"/>
</dbReference>
<dbReference type="Pfam" id="PF00005">
    <property type="entry name" value="ABC_tran"/>
    <property type="match status" value="1"/>
</dbReference>
<dbReference type="Pfam" id="PF17755">
    <property type="entry name" value="UvrA_DNA-bind"/>
    <property type="match status" value="1"/>
</dbReference>
<dbReference type="Pfam" id="PF17760">
    <property type="entry name" value="UvrA_inter"/>
    <property type="match status" value="1"/>
</dbReference>
<dbReference type="SUPFAM" id="SSF52540">
    <property type="entry name" value="P-loop containing nucleoside triphosphate hydrolases"/>
    <property type="match status" value="2"/>
</dbReference>
<dbReference type="PROSITE" id="PS00211">
    <property type="entry name" value="ABC_TRANSPORTER_1"/>
    <property type="match status" value="2"/>
</dbReference>
<dbReference type="PROSITE" id="PS50893">
    <property type="entry name" value="ABC_TRANSPORTER_2"/>
    <property type="match status" value="1"/>
</dbReference>
<comment type="function">
    <text evidence="2">The UvrABC repair system catalyzes the recognition and processing of DNA lesions. UvrA is an ATPase and a DNA-binding protein. A damage recognition complex composed of 2 UvrA and 2 UvrB subunits scans DNA for abnormalities. When the presence of a lesion has been verified by UvrB, the UvrA molecules dissociate.</text>
</comment>
<comment type="subunit">
    <text evidence="2">Forms a heterotetramer with UvrB during the search for lesions.</text>
</comment>
<comment type="subcellular location">
    <subcellularLocation>
        <location evidence="2">Cytoplasm</location>
    </subcellularLocation>
</comment>
<comment type="miscellaneous">
    <text evidence="1">Binds about 2 zinc atoms/molecule.</text>
</comment>
<comment type="similarity">
    <text evidence="2">Belongs to the ABC transporter superfamily. UvrA family.</text>
</comment>
<evidence type="ECO:0000250" key="1"/>
<evidence type="ECO:0000255" key="2">
    <source>
        <dbReference type="HAMAP-Rule" id="MF_00205"/>
    </source>
</evidence>
<gene>
    <name evidence="2" type="primary">uvrA</name>
    <name type="ordered locus">STY4450</name>
    <name type="ordered locus">t4160</name>
</gene>
<accession>P0A196</accession>
<accession>P37434</accession>
<name>UVRA_SALTI</name>